<reference key="1">
    <citation type="journal article" date="2005" name="Nucleic Acids Res.">
        <title>Genome dynamics and diversity of Shigella species, the etiologic agents of bacillary dysentery.</title>
        <authorList>
            <person name="Yang F."/>
            <person name="Yang J."/>
            <person name="Zhang X."/>
            <person name="Chen L."/>
            <person name="Jiang Y."/>
            <person name="Yan Y."/>
            <person name="Tang X."/>
            <person name="Wang J."/>
            <person name="Xiong Z."/>
            <person name="Dong J."/>
            <person name="Xue Y."/>
            <person name="Zhu Y."/>
            <person name="Xu X."/>
            <person name="Sun L."/>
            <person name="Chen S."/>
            <person name="Nie H."/>
            <person name="Peng J."/>
            <person name="Xu J."/>
            <person name="Wang Y."/>
            <person name="Yuan Z."/>
            <person name="Wen Y."/>
            <person name="Yao Z."/>
            <person name="Shen Y."/>
            <person name="Qiang B."/>
            <person name="Hou Y."/>
            <person name="Yu J."/>
            <person name="Jin Q."/>
        </authorList>
    </citation>
    <scope>NUCLEOTIDE SEQUENCE [LARGE SCALE GENOMIC DNA]</scope>
    <source>
        <strain>Sd197</strain>
    </source>
</reference>
<sequence length="428" mass="47257">MKNWKTLLLGIAMIANTSFAAPQVVDKVAAVVNNGVVLESDVDGLMQSVKLNAAQARQQLPDDATLRHQIMERLIMDQIILQMGQKMGVKISDEQLDQAIANIAKQNNMTLNQMRSRLAYDGLNYNTYRNQIRKEMIISEVRNNEVRRRITILPQEVESLAQQVGNQNDASTELNLSHILIPLPENPTSDQVNEAESQARAIVDQARNGADFGKLAIAHSADQQALNGGQMGWGRIQELPGIFAQALSTAKKGDIVGPIRSGVGFHILKVNDLRGESKNISVTEVHARHILLKPSPIMTDEQARVKLEQIAADIKSGKTTFAAAAKEFSQDPGSANQGGDLGWATADIFDPAFRDALTRLNKGQMSAPVHSSFGWHLIELLDTRNVDKTDAAQKDRAYRMLMNRKFSEEAASWMQEQRASAYVKILSN</sequence>
<name>SURA_SHIDS</name>
<feature type="signal peptide" evidence="1">
    <location>
        <begin position="1"/>
        <end position="20"/>
    </location>
</feature>
<feature type="chain" id="PRO_0000270040" description="Chaperone SurA">
    <location>
        <begin position="21"/>
        <end position="428"/>
    </location>
</feature>
<feature type="domain" description="PpiC 1" evidence="1">
    <location>
        <begin position="171"/>
        <end position="272"/>
    </location>
</feature>
<feature type="domain" description="PpiC 2" evidence="1">
    <location>
        <begin position="282"/>
        <end position="382"/>
    </location>
</feature>
<accession>Q32K41</accession>
<gene>
    <name evidence="1" type="primary">surA</name>
    <name type="ordered locus">SDY_0078</name>
</gene>
<organism>
    <name type="scientific">Shigella dysenteriae serotype 1 (strain Sd197)</name>
    <dbReference type="NCBI Taxonomy" id="300267"/>
    <lineage>
        <taxon>Bacteria</taxon>
        <taxon>Pseudomonadati</taxon>
        <taxon>Pseudomonadota</taxon>
        <taxon>Gammaproteobacteria</taxon>
        <taxon>Enterobacterales</taxon>
        <taxon>Enterobacteriaceae</taxon>
        <taxon>Shigella</taxon>
    </lineage>
</organism>
<protein>
    <recommendedName>
        <fullName evidence="1">Chaperone SurA</fullName>
    </recommendedName>
    <alternativeName>
        <fullName evidence="1">Peptidyl-prolyl cis-trans isomerase SurA</fullName>
        <shortName evidence="1">PPIase SurA</shortName>
        <ecNumber evidence="1">5.2.1.8</ecNumber>
    </alternativeName>
    <alternativeName>
        <fullName evidence="1">Rotamase SurA</fullName>
    </alternativeName>
</protein>
<evidence type="ECO:0000255" key="1">
    <source>
        <dbReference type="HAMAP-Rule" id="MF_01183"/>
    </source>
</evidence>
<comment type="function">
    <text evidence="1">Chaperone involved in the correct folding and assembly of outer membrane proteins. Recognizes specific patterns of aromatic residues and the orientation of their side chains, which are found more frequently in integral outer membrane proteins. May act in both early periplasmic and late outer membrane-associated steps of protein maturation.</text>
</comment>
<comment type="catalytic activity">
    <reaction evidence="1">
        <text>[protein]-peptidylproline (omega=180) = [protein]-peptidylproline (omega=0)</text>
        <dbReference type="Rhea" id="RHEA:16237"/>
        <dbReference type="Rhea" id="RHEA-COMP:10747"/>
        <dbReference type="Rhea" id="RHEA-COMP:10748"/>
        <dbReference type="ChEBI" id="CHEBI:83833"/>
        <dbReference type="ChEBI" id="CHEBI:83834"/>
        <dbReference type="EC" id="5.2.1.8"/>
    </reaction>
</comment>
<comment type="subcellular location">
    <subcellularLocation>
        <location evidence="1">Periplasm</location>
    </subcellularLocation>
    <text evidence="1">Is capable of associating with the outer membrane.</text>
</comment>
<comment type="domain">
    <text evidence="1">The PPIase activity resides only in the second parvulin domain. The N-terminal region and the C-terminal tail are necessary and sufficient for the chaperone activity of SurA. The PPIase activity is dispensable for SurA to function as a chaperone. The N-terminal region and the C-terminal tail are also required for porin recognition.</text>
</comment>
<proteinExistence type="inferred from homology"/>
<keyword id="KW-0143">Chaperone</keyword>
<keyword id="KW-0413">Isomerase</keyword>
<keyword id="KW-0574">Periplasm</keyword>
<keyword id="KW-1185">Reference proteome</keyword>
<keyword id="KW-0677">Repeat</keyword>
<keyword id="KW-0697">Rotamase</keyword>
<keyword id="KW-0732">Signal</keyword>
<dbReference type="EC" id="5.2.1.8" evidence="1"/>
<dbReference type="EMBL" id="CP000034">
    <property type="protein sequence ID" value="ABB60316.1"/>
    <property type="molecule type" value="Genomic_DNA"/>
</dbReference>
<dbReference type="RefSeq" id="WP_000800471.1">
    <property type="nucleotide sequence ID" value="NC_007606.1"/>
</dbReference>
<dbReference type="RefSeq" id="YP_401805.1">
    <property type="nucleotide sequence ID" value="NC_007606.1"/>
</dbReference>
<dbReference type="SMR" id="Q32K41"/>
<dbReference type="STRING" id="300267.SDY_0078"/>
<dbReference type="EnsemblBacteria" id="ABB60316">
    <property type="protein sequence ID" value="ABB60316"/>
    <property type="gene ID" value="SDY_0078"/>
</dbReference>
<dbReference type="KEGG" id="sdy:SDY_0078"/>
<dbReference type="PATRIC" id="fig|300267.13.peg.88"/>
<dbReference type="HOGENOM" id="CLU_034646_11_0_6"/>
<dbReference type="Proteomes" id="UP000002716">
    <property type="component" value="Chromosome"/>
</dbReference>
<dbReference type="GO" id="GO:0030288">
    <property type="term" value="C:outer membrane-bounded periplasmic space"/>
    <property type="evidence" value="ECO:0007669"/>
    <property type="project" value="InterPro"/>
</dbReference>
<dbReference type="GO" id="GO:0042277">
    <property type="term" value="F:peptide binding"/>
    <property type="evidence" value="ECO:0007669"/>
    <property type="project" value="InterPro"/>
</dbReference>
<dbReference type="GO" id="GO:0003755">
    <property type="term" value="F:peptidyl-prolyl cis-trans isomerase activity"/>
    <property type="evidence" value="ECO:0007669"/>
    <property type="project" value="UniProtKB-UniRule"/>
</dbReference>
<dbReference type="GO" id="GO:0051082">
    <property type="term" value="F:unfolded protein binding"/>
    <property type="evidence" value="ECO:0007669"/>
    <property type="project" value="UniProtKB-UniRule"/>
</dbReference>
<dbReference type="GO" id="GO:0043165">
    <property type="term" value="P:Gram-negative-bacterium-type cell outer membrane assembly"/>
    <property type="evidence" value="ECO:0007669"/>
    <property type="project" value="InterPro"/>
</dbReference>
<dbReference type="GO" id="GO:0006457">
    <property type="term" value="P:protein folding"/>
    <property type="evidence" value="ECO:0007669"/>
    <property type="project" value="UniProtKB-UniRule"/>
</dbReference>
<dbReference type="GO" id="GO:0050821">
    <property type="term" value="P:protein stabilization"/>
    <property type="evidence" value="ECO:0007669"/>
    <property type="project" value="InterPro"/>
</dbReference>
<dbReference type="FunFam" id="1.10.4030.10:FF:000002">
    <property type="entry name" value="Chaperone SurA"/>
    <property type="match status" value="1"/>
</dbReference>
<dbReference type="FunFam" id="3.10.50.40:FF:000007">
    <property type="entry name" value="Chaperone SurA"/>
    <property type="match status" value="1"/>
</dbReference>
<dbReference type="Gene3D" id="3.10.50.40">
    <property type="match status" value="2"/>
</dbReference>
<dbReference type="Gene3D" id="1.10.4030.10">
    <property type="entry name" value="Porin chaperone SurA, peptide-binding domain"/>
    <property type="match status" value="2"/>
</dbReference>
<dbReference type="HAMAP" id="MF_01183">
    <property type="entry name" value="Chaperone_SurA"/>
    <property type="match status" value="1"/>
</dbReference>
<dbReference type="InterPro" id="IPR050280">
    <property type="entry name" value="OMP_Chaperone_SurA"/>
</dbReference>
<dbReference type="InterPro" id="IPR046357">
    <property type="entry name" value="PPIase_dom_sf"/>
</dbReference>
<dbReference type="InterPro" id="IPR000297">
    <property type="entry name" value="PPIase_PpiC"/>
</dbReference>
<dbReference type="InterPro" id="IPR023058">
    <property type="entry name" value="PPIase_PpiC_CS"/>
</dbReference>
<dbReference type="InterPro" id="IPR023034">
    <property type="entry name" value="PPIase_SurA"/>
</dbReference>
<dbReference type="InterPro" id="IPR015391">
    <property type="entry name" value="SurA_N"/>
</dbReference>
<dbReference type="InterPro" id="IPR027304">
    <property type="entry name" value="Trigger_fact/SurA_dom_sf"/>
</dbReference>
<dbReference type="NCBIfam" id="NF008038">
    <property type="entry name" value="PRK10770.1"/>
    <property type="match status" value="1"/>
</dbReference>
<dbReference type="PANTHER" id="PTHR47637">
    <property type="entry name" value="CHAPERONE SURA"/>
    <property type="match status" value="1"/>
</dbReference>
<dbReference type="PANTHER" id="PTHR47637:SF1">
    <property type="entry name" value="CHAPERONE SURA"/>
    <property type="match status" value="1"/>
</dbReference>
<dbReference type="Pfam" id="PF00639">
    <property type="entry name" value="Rotamase"/>
    <property type="match status" value="1"/>
</dbReference>
<dbReference type="Pfam" id="PF13616">
    <property type="entry name" value="Rotamase_3"/>
    <property type="match status" value="1"/>
</dbReference>
<dbReference type="Pfam" id="PF09312">
    <property type="entry name" value="SurA_N"/>
    <property type="match status" value="1"/>
</dbReference>
<dbReference type="SUPFAM" id="SSF54534">
    <property type="entry name" value="FKBP-like"/>
    <property type="match status" value="2"/>
</dbReference>
<dbReference type="SUPFAM" id="SSF109998">
    <property type="entry name" value="Triger factor/SurA peptide-binding domain-like"/>
    <property type="match status" value="1"/>
</dbReference>
<dbReference type="PROSITE" id="PS01096">
    <property type="entry name" value="PPIC_PPIASE_1"/>
    <property type="match status" value="2"/>
</dbReference>
<dbReference type="PROSITE" id="PS50198">
    <property type="entry name" value="PPIC_PPIASE_2"/>
    <property type="match status" value="2"/>
</dbReference>